<protein>
    <recommendedName>
        <fullName>ATP-dependent kinase YFH7</fullName>
        <ecNumber>2.7.1.-</ecNumber>
    </recommendedName>
</protein>
<reference key="1">
    <citation type="journal article" date="2009" name="Genome Res.">
        <title>Comparative genomics of protoploid Saccharomycetaceae.</title>
        <authorList>
            <consortium name="The Genolevures Consortium"/>
            <person name="Souciet J.-L."/>
            <person name="Dujon B."/>
            <person name="Gaillardin C."/>
            <person name="Johnston M."/>
            <person name="Baret P.V."/>
            <person name="Cliften P."/>
            <person name="Sherman D.J."/>
            <person name="Weissenbach J."/>
            <person name="Westhof E."/>
            <person name="Wincker P."/>
            <person name="Jubin C."/>
            <person name="Poulain J."/>
            <person name="Barbe V."/>
            <person name="Segurens B."/>
            <person name="Artiguenave F."/>
            <person name="Anthouard V."/>
            <person name="Vacherie B."/>
            <person name="Val M.-E."/>
            <person name="Fulton R.S."/>
            <person name="Minx P."/>
            <person name="Wilson R."/>
            <person name="Durrens P."/>
            <person name="Jean G."/>
            <person name="Marck C."/>
            <person name="Martin T."/>
            <person name="Nikolski M."/>
            <person name="Rolland T."/>
            <person name="Seret M.-L."/>
            <person name="Casaregola S."/>
            <person name="Despons L."/>
            <person name="Fairhead C."/>
            <person name="Fischer G."/>
            <person name="Lafontaine I."/>
            <person name="Leh V."/>
            <person name="Lemaire M."/>
            <person name="de Montigny J."/>
            <person name="Neuveglise C."/>
            <person name="Thierry A."/>
            <person name="Blanc-Lenfle I."/>
            <person name="Bleykasten C."/>
            <person name="Diffels J."/>
            <person name="Fritsch E."/>
            <person name="Frangeul L."/>
            <person name="Goeffon A."/>
            <person name="Jauniaux N."/>
            <person name="Kachouri-Lafond R."/>
            <person name="Payen C."/>
            <person name="Potier S."/>
            <person name="Pribylova L."/>
            <person name="Ozanne C."/>
            <person name="Richard G.-F."/>
            <person name="Sacerdot C."/>
            <person name="Straub M.-L."/>
            <person name="Talla E."/>
        </authorList>
    </citation>
    <scope>NUCLEOTIDE SEQUENCE [LARGE SCALE GENOMIC DNA]</scope>
    <source>
        <strain>ATCC 2623 / CBS 732 / BCRC 21506 / NBRC 1130 / NCYC 568 / NRRL Y-229</strain>
    </source>
</reference>
<feature type="chain" id="PRO_0000404222" description="ATP-dependent kinase YFH7">
    <location>
        <begin position="1"/>
        <end position="375"/>
    </location>
</feature>
<feature type="binding site" evidence="1">
    <location>
        <begin position="66"/>
        <end position="74"/>
    </location>
    <ligand>
        <name>ATP</name>
        <dbReference type="ChEBI" id="CHEBI:30616"/>
    </ligand>
</feature>
<accession>C5DXG0</accession>
<proteinExistence type="inferred from homology"/>
<sequence>MLGCFFFFFIQYKVQVEIFVFKVHYLREDTPFPKMVVDVDALANEAIGLLDQCKDDNYRVCILIVGPPGSGKSTVAQDLSRQINHRFDEYRLQGNQKSAHGGTRSRASDVALASDVPEITTPLSEELAFNGGILPKYVEDVNFQPVKRRLENGDLQILGRGGLPNAFTISNDVEPDEESSFAQIVPMDGFHLSRQCLSSFQNPQEAHKRRGSPPTFDSNNFAQLCKTLAQTCTIKPGSCDAKSCFEFMAKTYDPHFPCIKIPGFDHSLKDPTPDQFCLNGHTRIVILEGLYLLYDKENWQRVHEILQNTGSLLVWYIDIEDHVIEERVAKRHFNSGLADSVEQGRLKFQGNDLLNARLIRKNLVQSGKVVTLRND</sequence>
<keyword id="KW-0067">ATP-binding</keyword>
<keyword id="KW-0418">Kinase</keyword>
<keyword id="KW-0547">Nucleotide-binding</keyword>
<keyword id="KW-1185">Reference proteome</keyword>
<keyword id="KW-0808">Transferase</keyword>
<evidence type="ECO:0000250" key="1"/>
<evidence type="ECO:0000305" key="2"/>
<organism>
    <name type="scientific">Zygosaccharomyces rouxii (strain ATCC 2623 / CBS 732 / NBRC 1130 / NCYC 568 / NRRL Y-229)</name>
    <dbReference type="NCBI Taxonomy" id="559307"/>
    <lineage>
        <taxon>Eukaryota</taxon>
        <taxon>Fungi</taxon>
        <taxon>Dikarya</taxon>
        <taxon>Ascomycota</taxon>
        <taxon>Saccharomycotina</taxon>
        <taxon>Saccharomycetes</taxon>
        <taxon>Saccharomycetales</taxon>
        <taxon>Saccharomycetaceae</taxon>
        <taxon>Zygosaccharomyces</taxon>
    </lineage>
</organism>
<name>YFH7_ZYGRC</name>
<dbReference type="EC" id="2.7.1.-"/>
<dbReference type="EMBL" id="CU928178">
    <property type="protein sequence ID" value="CAR28471.1"/>
    <property type="molecule type" value="Genomic_DNA"/>
</dbReference>
<dbReference type="RefSeq" id="XP_002497404.1">
    <property type="nucleotide sequence ID" value="XM_002497359.1"/>
</dbReference>
<dbReference type="SMR" id="C5DXG0"/>
<dbReference type="FunCoup" id="C5DXG0">
    <property type="interactions" value="22"/>
</dbReference>
<dbReference type="STRING" id="559307.C5DXG0"/>
<dbReference type="GeneID" id="8205163"/>
<dbReference type="KEGG" id="zro:ZYRO0F04752g"/>
<dbReference type="HOGENOM" id="CLU_067202_1_0_1"/>
<dbReference type="InParanoid" id="C5DXG0"/>
<dbReference type="Proteomes" id="UP000008536">
    <property type="component" value="Chromosome F"/>
</dbReference>
<dbReference type="GO" id="GO:0005524">
    <property type="term" value="F:ATP binding"/>
    <property type="evidence" value="ECO:0007669"/>
    <property type="project" value="UniProtKB-KW"/>
</dbReference>
<dbReference type="GO" id="GO:0016301">
    <property type="term" value="F:kinase activity"/>
    <property type="evidence" value="ECO:0007669"/>
    <property type="project" value="UniProtKB-KW"/>
</dbReference>
<dbReference type="Gene3D" id="3.40.50.300">
    <property type="entry name" value="P-loop containing nucleotide triphosphate hydrolases"/>
    <property type="match status" value="1"/>
</dbReference>
<dbReference type="InterPro" id="IPR027417">
    <property type="entry name" value="P-loop_NTPase"/>
</dbReference>
<dbReference type="PANTHER" id="PTHR10285">
    <property type="entry name" value="URIDINE KINASE"/>
    <property type="match status" value="1"/>
</dbReference>
<dbReference type="SUPFAM" id="SSF52540">
    <property type="entry name" value="P-loop containing nucleoside triphosphate hydrolases"/>
    <property type="match status" value="1"/>
</dbReference>
<comment type="function">
    <text evidence="1">ATP-dependent kinase that could be involved in endoplasmic reticulum membrane assembly.</text>
</comment>
<comment type="similarity">
    <text evidence="2">Belongs to the YFH7 family.</text>
</comment>
<gene>
    <name type="primary">YFH7</name>
    <name type="ordered locus">ZYRO0F04752g</name>
</gene>